<gene>
    <name evidence="2" type="primary">purF</name>
    <name type="ordered locus">BQ2027_MB0831</name>
</gene>
<proteinExistence type="inferred from homology"/>
<name>PUR1_MYCBO</name>
<evidence type="ECO:0000250" key="1"/>
<evidence type="ECO:0000255" key="2">
    <source>
        <dbReference type="HAMAP-Rule" id="MF_01931"/>
    </source>
</evidence>
<evidence type="ECO:0000256" key="3">
    <source>
        <dbReference type="SAM" id="MobiDB-lite"/>
    </source>
</evidence>
<sequence>MAVDSDYVTDRAAGSRQTVTGQQPEQDLNSPREECGVFGVWAPGEDVAKLTYYGLYALQHRGQEAAGIAVADGSQVLVFKDLGLVSQVFDEQTLAAMQGHVAIGHCRYSTTGDTTWENAQPVFRNTAAGTGVALGHNGNLVNAAALAARARDAGLIATRCPAPATTDSDILGALLAHGAADSTLEQAALDLLPTVRGAFCLTFMDENTLYACRDPYGVRPLSLGRLDRGWVVASETAALDIVGASFVRDIEPGELLAIDADGVRSTRFANPTPKGCVFEYVYLARPDSTIAGRSVHAARVEIGRRLARECPVEADLVIGVPESGTPAAVGYAQESGVPYGQGLMKNAYVGRTFIQPSQTIRQLGIRLKLNPLKEVIRGKRLIVVDDSIVRGNTQRALVRMLREAGAVELHVRIASPPVKWPCFYGIDFPSPAELIANAVENEDEMLEAVRHAIGADTLGYISLRGMVAASEQPTSRLCTACFDGKYPIELPRETALGKNVIEHMLANAARGAALGELAADDEVPVGR</sequence>
<organism>
    <name type="scientific">Mycobacterium bovis (strain ATCC BAA-935 / AF2122/97)</name>
    <dbReference type="NCBI Taxonomy" id="233413"/>
    <lineage>
        <taxon>Bacteria</taxon>
        <taxon>Bacillati</taxon>
        <taxon>Actinomycetota</taxon>
        <taxon>Actinomycetes</taxon>
        <taxon>Mycobacteriales</taxon>
        <taxon>Mycobacteriaceae</taxon>
        <taxon>Mycobacterium</taxon>
        <taxon>Mycobacterium tuberculosis complex</taxon>
    </lineage>
</organism>
<keyword id="KW-0004">4Fe-4S</keyword>
<keyword id="KW-0315">Glutamine amidotransferase</keyword>
<keyword id="KW-0328">Glycosyltransferase</keyword>
<keyword id="KW-0408">Iron</keyword>
<keyword id="KW-0411">Iron-sulfur</keyword>
<keyword id="KW-0460">Magnesium</keyword>
<keyword id="KW-0479">Metal-binding</keyword>
<keyword id="KW-0658">Purine biosynthesis</keyword>
<keyword id="KW-1185">Reference proteome</keyword>
<keyword id="KW-0808">Transferase</keyword>
<dbReference type="EC" id="2.4.2.14" evidence="2"/>
<dbReference type="EMBL" id="LT708304">
    <property type="protein sequence ID" value="SIT99430.1"/>
    <property type="molecule type" value="Genomic_DNA"/>
</dbReference>
<dbReference type="RefSeq" id="NP_854489.1">
    <property type="nucleotide sequence ID" value="NC_002945.3"/>
</dbReference>
<dbReference type="SMR" id="P65830"/>
<dbReference type="MEROPS" id="C44.001"/>
<dbReference type="KEGG" id="mbo:BQ2027_MB0831"/>
<dbReference type="PATRIC" id="fig|233413.5.peg.903"/>
<dbReference type="UniPathway" id="UPA00074">
    <property type="reaction ID" value="UER00124"/>
</dbReference>
<dbReference type="Proteomes" id="UP000001419">
    <property type="component" value="Chromosome"/>
</dbReference>
<dbReference type="GO" id="GO:0051539">
    <property type="term" value="F:4 iron, 4 sulfur cluster binding"/>
    <property type="evidence" value="ECO:0007669"/>
    <property type="project" value="UniProtKB-KW"/>
</dbReference>
<dbReference type="GO" id="GO:0004044">
    <property type="term" value="F:amidophosphoribosyltransferase activity"/>
    <property type="evidence" value="ECO:0007669"/>
    <property type="project" value="UniProtKB-UniRule"/>
</dbReference>
<dbReference type="GO" id="GO:0000287">
    <property type="term" value="F:magnesium ion binding"/>
    <property type="evidence" value="ECO:0007669"/>
    <property type="project" value="UniProtKB-UniRule"/>
</dbReference>
<dbReference type="GO" id="GO:0006189">
    <property type="term" value="P:'de novo' IMP biosynthetic process"/>
    <property type="evidence" value="ECO:0007669"/>
    <property type="project" value="UniProtKB-UniRule"/>
</dbReference>
<dbReference type="GO" id="GO:0009113">
    <property type="term" value="P:purine nucleobase biosynthetic process"/>
    <property type="evidence" value="ECO:0007669"/>
    <property type="project" value="InterPro"/>
</dbReference>
<dbReference type="CDD" id="cd00715">
    <property type="entry name" value="GPATase_N"/>
    <property type="match status" value="1"/>
</dbReference>
<dbReference type="CDD" id="cd06223">
    <property type="entry name" value="PRTases_typeI"/>
    <property type="match status" value="1"/>
</dbReference>
<dbReference type="Gene3D" id="3.40.50.2020">
    <property type="match status" value="1"/>
</dbReference>
<dbReference type="Gene3D" id="3.60.20.10">
    <property type="entry name" value="Glutamine Phosphoribosylpyrophosphate, subunit 1, domain 1"/>
    <property type="match status" value="1"/>
</dbReference>
<dbReference type="HAMAP" id="MF_01931">
    <property type="entry name" value="PurF"/>
    <property type="match status" value="1"/>
</dbReference>
<dbReference type="InterPro" id="IPR017932">
    <property type="entry name" value="GATase_2_dom"/>
</dbReference>
<dbReference type="InterPro" id="IPR029055">
    <property type="entry name" value="Ntn_hydrolases_N"/>
</dbReference>
<dbReference type="InterPro" id="IPR000836">
    <property type="entry name" value="PRibTrfase_dom"/>
</dbReference>
<dbReference type="InterPro" id="IPR029057">
    <property type="entry name" value="PRTase-like"/>
</dbReference>
<dbReference type="InterPro" id="IPR005854">
    <property type="entry name" value="PurF"/>
</dbReference>
<dbReference type="InterPro" id="IPR035584">
    <property type="entry name" value="PurF_N"/>
</dbReference>
<dbReference type="NCBIfam" id="TIGR01134">
    <property type="entry name" value="purF"/>
    <property type="match status" value="1"/>
</dbReference>
<dbReference type="PANTHER" id="PTHR11907">
    <property type="entry name" value="AMIDOPHOSPHORIBOSYLTRANSFERASE"/>
    <property type="match status" value="1"/>
</dbReference>
<dbReference type="Pfam" id="PF13522">
    <property type="entry name" value="GATase_6"/>
    <property type="match status" value="1"/>
</dbReference>
<dbReference type="Pfam" id="PF00156">
    <property type="entry name" value="Pribosyltran"/>
    <property type="match status" value="1"/>
</dbReference>
<dbReference type="PIRSF" id="PIRSF000485">
    <property type="entry name" value="Amd_phspho_trans"/>
    <property type="match status" value="1"/>
</dbReference>
<dbReference type="SUPFAM" id="SSF56235">
    <property type="entry name" value="N-terminal nucleophile aminohydrolases (Ntn hydrolases)"/>
    <property type="match status" value="1"/>
</dbReference>
<dbReference type="SUPFAM" id="SSF53271">
    <property type="entry name" value="PRTase-like"/>
    <property type="match status" value="1"/>
</dbReference>
<dbReference type="PROSITE" id="PS51278">
    <property type="entry name" value="GATASE_TYPE_2"/>
    <property type="match status" value="1"/>
</dbReference>
<dbReference type="PROSITE" id="PS00103">
    <property type="entry name" value="PUR_PYR_PR_TRANSFER"/>
    <property type="match status" value="1"/>
</dbReference>
<feature type="propeptide" id="PRO_0000029259" evidence="1">
    <location>
        <begin position="1"/>
        <end position="34"/>
    </location>
</feature>
<feature type="chain" id="PRO_0000029260" description="Amidophosphoribosyltransferase">
    <location>
        <begin position="35"/>
        <end position="527"/>
    </location>
</feature>
<feature type="domain" description="Glutamine amidotransferase type-2" evidence="2">
    <location>
        <begin position="35"/>
        <end position="261"/>
    </location>
</feature>
<feature type="region of interest" description="Disordered" evidence="3">
    <location>
        <begin position="1"/>
        <end position="30"/>
    </location>
</feature>
<feature type="compositionally biased region" description="Polar residues" evidence="3">
    <location>
        <begin position="15"/>
        <end position="29"/>
    </location>
</feature>
<feature type="active site" description="Nucleophile" evidence="2">
    <location>
        <position position="35"/>
    </location>
</feature>
<feature type="binding site" evidence="2">
    <location>
        <position position="276"/>
    </location>
    <ligand>
        <name>[4Fe-4S] cluster</name>
        <dbReference type="ChEBI" id="CHEBI:49883"/>
    </ligand>
</feature>
<feature type="binding site" evidence="2">
    <location>
        <position position="323"/>
    </location>
    <ligand>
        <name>Mg(2+)</name>
        <dbReference type="ChEBI" id="CHEBI:18420"/>
    </ligand>
</feature>
<feature type="binding site" evidence="2">
    <location>
        <position position="385"/>
    </location>
    <ligand>
        <name>Mg(2+)</name>
        <dbReference type="ChEBI" id="CHEBI:18420"/>
    </ligand>
</feature>
<feature type="binding site" evidence="2">
    <location>
        <position position="386"/>
    </location>
    <ligand>
        <name>Mg(2+)</name>
        <dbReference type="ChEBI" id="CHEBI:18420"/>
    </ligand>
</feature>
<feature type="binding site" evidence="2">
    <location>
        <position position="422"/>
    </location>
    <ligand>
        <name>[4Fe-4S] cluster</name>
        <dbReference type="ChEBI" id="CHEBI:49883"/>
    </ligand>
</feature>
<feature type="binding site" evidence="2">
    <location>
        <position position="478"/>
    </location>
    <ligand>
        <name>[4Fe-4S] cluster</name>
        <dbReference type="ChEBI" id="CHEBI:49883"/>
    </ligand>
</feature>
<feature type="binding site" evidence="2">
    <location>
        <position position="481"/>
    </location>
    <ligand>
        <name>[4Fe-4S] cluster</name>
        <dbReference type="ChEBI" id="CHEBI:49883"/>
    </ligand>
</feature>
<accession>P65830</accession>
<accession>A0A1R3XWI2</accession>
<accession>O06626</accession>
<accession>X2BG87</accession>
<protein>
    <recommendedName>
        <fullName evidence="2">Amidophosphoribosyltransferase</fullName>
        <shortName evidence="2">ATase</shortName>
        <ecNumber evidence="2">2.4.2.14</ecNumber>
    </recommendedName>
    <alternativeName>
        <fullName evidence="2">Glutamine phosphoribosylpyrophosphate amidotransferase</fullName>
        <shortName evidence="2">GPATase</shortName>
    </alternativeName>
</protein>
<comment type="function">
    <text evidence="2">Catalyzes the formation of phosphoribosylamine from phosphoribosylpyrophosphate (PRPP) and glutamine.</text>
</comment>
<comment type="catalytic activity">
    <reaction evidence="2">
        <text>5-phospho-beta-D-ribosylamine + L-glutamate + diphosphate = 5-phospho-alpha-D-ribose 1-diphosphate + L-glutamine + H2O</text>
        <dbReference type="Rhea" id="RHEA:14905"/>
        <dbReference type="ChEBI" id="CHEBI:15377"/>
        <dbReference type="ChEBI" id="CHEBI:29985"/>
        <dbReference type="ChEBI" id="CHEBI:33019"/>
        <dbReference type="ChEBI" id="CHEBI:58017"/>
        <dbReference type="ChEBI" id="CHEBI:58359"/>
        <dbReference type="ChEBI" id="CHEBI:58681"/>
        <dbReference type="EC" id="2.4.2.14"/>
    </reaction>
</comment>
<comment type="cofactor">
    <cofactor evidence="2">
        <name>Mg(2+)</name>
        <dbReference type="ChEBI" id="CHEBI:18420"/>
    </cofactor>
    <text evidence="2">Binds 1 Mg(2+) ion per subunit.</text>
</comment>
<comment type="cofactor">
    <cofactor evidence="2">
        <name>[4Fe-4S] cluster</name>
        <dbReference type="ChEBI" id="CHEBI:49883"/>
    </cofactor>
    <text evidence="2">Binds 1 [4Fe-4S] cluster per subunit.</text>
</comment>
<comment type="pathway">
    <text evidence="2">Purine metabolism; IMP biosynthesis via de novo pathway; N(1)-(5-phospho-D-ribosyl)glycinamide from 5-phospho-alpha-D-ribose 1-diphosphate: step 1/2.</text>
</comment>
<comment type="similarity">
    <text evidence="2">In the C-terminal section; belongs to the purine/pyrimidine phosphoribosyltransferase family.</text>
</comment>
<reference key="1">
    <citation type="journal article" date="2003" name="Proc. Natl. Acad. Sci. U.S.A.">
        <title>The complete genome sequence of Mycobacterium bovis.</title>
        <authorList>
            <person name="Garnier T."/>
            <person name="Eiglmeier K."/>
            <person name="Camus J.-C."/>
            <person name="Medina N."/>
            <person name="Mansoor H."/>
            <person name="Pryor M."/>
            <person name="Duthoy S."/>
            <person name="Grondin S."/>
            <person name="Lacroix C."/>
            <person name="Monsempe C."/>
            <person name="Simon S."/>
            <person name="Harris B."/>
            <person name="Atkin R."/>
            <person name="Doggett J."/>
            <person name="Mayes R."/>
            <person name="Keating L."/>
            <person name="Wheeler P.R."/>
            <person name="Parkhill J."/>
            <person name="Barrell B.G."/>
            <person name="Cole S.T."/>
            <person name="Gordon S.V."/>
            <person name="Hewinson R.G."/>
        </authorList>
    </citation>
    <scope>NUCLEOTIDE SEQUENCE [LARGE SCALE GENOMIC DNA]</scope>
    <source>
        <strain>ATCC BAA-935 / AF2122/97</strain>
    </source>
</reference>
<reference key="2">
    <citation type="journal article" date="2017" name="Genome Announc.">
        <title>Updated reference genome sequence and annotation of Mycobacterium bovis AF2122/97.</title>
        <authorList>
            <person name="Malone K.M."/>
            <person name="Farrell D."/>
            <person name="Stuber T.P."/>
            <person name="Schubert O.T."/>
            <person name="Aebersold R."/>
            <person name="Robbe-Austerman S."/>
            <person name="Gordon S.V."/>
        </authorList>
    </citation>
    <scope>NUCLEOTIDE SEQUENCE [LARGE SCALE GENOMIC DNA]</scope>
    <scope>GENOME REANNOTATION</scope>
    <source>
        <strain>ATCC BAA-935 / AF2122/97</strain>
    </source>
</reference>